<keyword id="KW-0007">Acetylation</keyword>
<keyword id="KW-0903">Direct protein sequencing</keyword>
<keyword id="KW-0349">Heme</keyword>
<keyword id="KW-0408">Iron</keyword>
<keyword id="KW-0479">Metal-binding</keyword>
<keyword id="KW-0561">Oxygen transport</keyword>
<keyword id="KW-0597">Phosphoprotein</keyword>
<keyword id="KW-1185">Reference proteome</keyword>
<keyword id="KW-0702">S-nitrosylation</keyword>
<keyword id="KW-0813">Transport</keyword>
<feature type="chain" id="PRO_0000052992" description="Hemoglobin subunit beta">
    <location>
        <begin position="1"/>
        <end position="146"/>
    </location>
</feature>
<feature type="domain" description="Globin" evidence="3">
    <location>
        <begin position="2"/>
        <end position="146"/>
    </location>
</feature>
<feature type="binding site" description="distal binding residue">
    <location>
        <position position="63"/>
    </location>
    <ligand>
        <name>heme b</name>
        <dbReference type="ChEBI" id="CHEBI:60344"/>
    </ligand>
    <ligandPart>
        <name>Fe</name>
        <dbReference type="ChEBI" id="CHEBI:18248"/>
    </ligandPart>
</feature>
<feature type="binding site" description="proximal binding residue">
    <location>
        <position position="92"/>
    </location>
    <ligand>
        <name>heme b</name>
        <dbReference type="ChEBI" id="CHEBI:60344"/>
    </ligand>
    <ligandPart>
        <name>Fe</name>
        <dbReference type="ChEBI" id="CHEBI:18248"/>
    </ligandPart>
</feature>
<feature type="modified residue" description="N-acetylvaline" evidence="1">
    <location>
        <position position="1"/>
    </location>
</feature>
<feature type="modified residue" description="Phosphothreonine" evidence="2">
    <location>
        <position position="12"/>
    </location>
</feature>
<feature type="modified residue" description="Phosphoserine" evidence="2">
    <location>
        <position position="44"/>
    </location>
</feature>
<feature type="modified residue" description="N6-acetyllysine" evidence="2">
    <location>
        <position position="59"/>
    </location>
</feature>
<feature type="modified residue" description="N6-acetyllysine" evidence="2">
    <location>
        <position position="82"/>
    </location>
</feature>
<feature type="modified residue" description="S-nitrosocysteine" evidence="2">
    <location>
        <position position="93"/>
    </location>
</feature>
<feature type="modified residue" description="N6-acetyllysine" evidence="2">
    <location>
        <position position="144"/>
    </location>
</feature>
<proteinExistence type="evidence at protein level"/>
<organism>
    <name type="scientific">Leptonychotes weddellii</name>
    <name type="common">Weddell seal</name>
    <name type="synonym">Otaria weddellii</name>
    <dbReference type="NCBI Taxonomy" id="9713"/>
    <lineage>
        <taxon>Eukaryota</taxon>
        <taxon>Metazoa</taxon>
        <taxon>Chordata</taxon>
        <taxon>Craniata</taxon>
        <taxon>Vertebrata</taxon>
        <taxon>Euteleostomi</taxon>
        <taxon>Mammalia</taxon>
        <taxon>Eutheria</taxon>
        <taxon>Laurasiatheria</taxon>
        <taxon>Carnivora</taxon>
        <taxon>Caniformia</taxon>
        <taxon>Pinnipedia</taxon>
        <taxon>Phocidae</taxon>
        <taxon>Monachinae</taxon>
        <taxon>Lobodontini</taxon>
        <taxon>Leptonychotes</taxon>
    </lineage>
</organism>
<comment type="function">
    <text>Involved in oxygen transport from the lung to the various peripheral tissues.</text>
</comment>
<comment type="subunit">
    <text>Heterotetramer of two alpha chains and two beta chains.</text>
</comment>
<comment type="tissue specificity">
    <text>Red blood cells.</text>
</comment>
<comment type="similarity">
    <text evidence="3">Belongs to the globin family.</text>
</comment>
<sequence>VHLTAEEKSAVTALWGKVNVDEVGGEALGRLLVVYPWTQRFFDSFGDLSSPNAIMSNPKVKAHGKKVLNSFSDGLKNLDNLKGTFAKLSELHCDQLHVDPENFKLLGNVLVCVLAHHFGKEFTPQVQAAYQKVVAGVANALAHKYH</sequence>
<protein>
    <recommendedName>
        <fullName>Hemoglobin subunit beta</fullName>
    </recommendedName>
    <alternativeName>
        <fullName>Beta-globin</fullName>
    </alternativeName>
    <alternativeName>
        <fullName>Hemoglobin beta chain</fullName>
    </alternativeName>
</protein>
<evidence type="ECO:0000250" key="1">
    <source>
        <dbReference type="UniProtKB" id="P02086"/>
    </source>
</evidence>
<evidence type="ECO:0000250" key="2">
    <source>
        <dbReference type="UniProtKB" id="P68871"/>
    </source>
</evidence>
<evidence type="ECO:0000255" key="3">
    <source>
        <dbReference type="PROSITE-ProRule" id="PRU00238"/>
    </source>
</evidence>
<dbReference type="PIR" id="S04952">
    <property type="entry name" value="HBSLW"/>
</dbReference>
<dbReference type="SMR" id="P15166"/>
<dbReference type="STRING" id="9713.P15166"/>
<dbReference type="Proteomes" id="UP000245341">
    <property type="component" value="Unplaced"/>
</dbReference>
<dbReference type="GO" id="GO:0072562">
    <property type="term" value="C:blood microparticle"/>
    <property type="evidence" value="ECO:0007669"/>
    <property type="project" value="TreeGrafter"/>
</dbReference>
<dbReference type="GO" id="GO:0031838">
    <property type="term" value="C:haptoglobin-hemoglobin complex"/>
    <property type="evidence" value="ECO:0007669"/>
    <property type="project" value="TreeGrafter"/>
</dbReference>
<dbReference type="GO" id="GO:0005833">
    <property type="term" value="C:hemoglobin complex"/>
    <property type="evidence" value="ECO:0007669"/>
    <property type="project" value="InterPro"/>
</dbReference>
<dbReference type="GO" id="GO:0031720">
    <property type="term" value="F:haptoglobin binding"/>
    <property type="evidence" value="ECO:0007669"/>
    <property type="project" value="TreeGrafter"/>
</dbReference>
<dbReference type="GO" id="GO:0020037">
    <property type="term" value="F:heme binding"/>
    <property type="evidence" value="ECO:0007669"/>
    <property type="project" value="InterPro"/>
</dbReference>
<dbReference type="GO" id="GO:0031721">
    <property type="term" value="F:hemoglobin alpha binding"/>
    <property type="evidence" value="ECO:0007669"/>
    <property type="project" value="TreeGrafter"/>
</dbReference>
<dbReference type="GO" id="GO:0046872">
    <property type="term" value="F:metal ion binding"/>
    <property type="evidence" value="ECO:0007669"/>
    <property type="project" value="UniProtKB-KW"/>
</dbReference>
<dbReference type="GO" id="GO:0043177">
    <property type="term" value="F:organic acid binding"/>
    <property type="evidence" value="ECO:0007669"/>
    <property type="project" value="TreeGrafter"/>
</dbReference>
<dbReference type="GO" id="GO:0019825">
    <property type="term" value="F:oxygen binding"/>
    <property type="evidence" value="ECO:0007669"/>
    <property type="project" value="InterPro"/>
</dbReference>
<dbReference type="GO" id="GO:0005344">
    <property type="term" value="F:oxygen carrier activity"/>
    <property type="evidence" value="ECO:0007669"/>
    <property type="project" value="UniProtKB-KW"/>
</dbReference>
<dbReference type="GO" id="GO:0004601">
    <property type="term" value="F:peroxidase activity"/>
    <property type="evidence" value="ECO:0007669"/>
    <property type="project" value="TreeGrafter"/>
</dbReference>
<dbReference type="GO" id="GO:0042744">
    <property type="term" value="P:hydrogen peroxide catabolic process"/>
    <property type="evidence" value="ECO:0007669"/>
    <property type="project" value="TreeGrafter"/>
</dbReference>
<dbReference type="CDD" id="cd08925">
    <property type="entry name" value="Hb-beta-like"/>
    <property type="match status" value="1"/>
</dbReference>
<dbReference type="FunFam" id="1.10.490.10:FF:000001">
    <property type="entry name" value="Hemoglobin subunit beta"/>
    <property type="match status" value="1"/>
</dbReference>
<dbReference type="Gene3D" id="1.10.490.10">
    <property type="entry name" value="Globins"/>
    <property type="match status" value="1"/>
</dbReference>
<dbReference type="InterPro" id="IPR000971">
    <property type="entry name" value="Globin"/>
</dbReference>
<dbReference type="InterPro" id="IPR009050">
    <property type="entry name" value="Globin-like_sf"/>
</dbReference>
<dbReference type="InterPro" id="IPR012292">
    <property type="entry name" value="Globin/Proto"/>
</dbReference>
<dbReference type="InterPro" id="IPR002337">
    <property type="entry name" value="Hemoglobin_b"/>
</dbReference>
<dbReference type="InterPro" id="IPR050056">
    <property type="entry name" value="Hemoglobin_oxygen_transport"/>
</dbReference>
<dbReference type="PANTHER" id="PTHR11442">
    <property type="entry name" value="HEMOGLOBIN FAMILY MEMBER"/>
    <property type="match status" value="1"/>
</dbReference>
<dbReference type="PANTHER" id="PTHR11442:SF42">
    <property type="entry name" value="HEMOGLOBIN SUBUNIT BETA"/>
    <property type="match status" value="1"/>
</dbReference>
<dbReference type="Pfam" id="PF00042">
    <property type="entry name" value="Globin"/>
    <property type="match status" value="1"/>
</dbReference>
<dbReference type="PRINTS" id="PR00814">
    <property type="entry name" value="BETAHAEM"/>
</dbReference>
<dbReference type="SUPFAM" id="SSF46458">
    <property type="entry name" value="Globin-like"/>
    <property type="match status" value="1"/>
</dbReference>
<dbReference type="PROSITE" id="PS01033">
    <property type="entry name" value="GLOBIN"/>
    <property type="match status" value="1"/>
</dbReference>
<accession>P15166</accession>
<name>HBB_LEPWE</name>
<reference key="1">
    <citation type="journal article" date="1989" name="Biol. Chem. Hoppe-Seyler">
        <title>Carnivora: the primary structure of Weddell Seal (Leptonychotes weddelli, Pinnipedia) hemoglobin.</title>
        <authorList>
            <person name="Lin H.-X."/>
            <person name="Kleinschmidt T."/>
            <person name="Braunitzer G."/>
        </authorList>
    </citation>
    <scope>PROTEIN SEQUENCE</scope>
</reference>
<gene>
    <name type="primary">HBB</name>
</gene>